<proteinExistence type="evidence at protein level"/>
<accession>Q9FLK4</accession>
<reference key="1">
    <citation type="journal article" date="1998" name="DNA Res.">
        <title>Structural analysis of Arabidopsis thaliana chromosome 5. IV. Sequence features of the regions of 1,456,315 bp covered by nineteen physically assigned P1 and TAC clones.</title>
        <authorList>
            <person name="Sato S."/>
            <person name="Kaneko T."/>
            <person name="Kotani H."/>
            <person name="Nakamura Y."/>
            <person name="Asamizu E."/>
            <person name="Miyajima N."/>
            <person name="Tabata S."/>
        </authorList>
    </citation>
    <scope>NUCLEOTIDE SEQUENCE [LARGE SCALE GENOMIC DNA]</scope>
    <source>
        <strain>cv. Columbia</strain>
    </source>
</reference>
<reference key="2">
    <citation type="journal article" date="2017" name="Plant J.">
        <title>Araport11: a complete reannotation of the Arabidopsis thaliana reference genome.</title>
        <authorList>
            <person name="Cheng C.Y."/>
            <person name="Krishnakumar V."/>
            <person name="Chan A.P."/>
            <person name="Thibaud-Nissen F."/>
            <person name="Schobel S."/>
            <person name="Town C.D."/>
        </authorList>
    </citation>
    <scope>GENOME REANNOTATION</scope>
    <source>
        <strain>cv. Columbia</strain>
    </source>
</reference>
<reference key="3">
    <citation type="journal article" date="2002" name="Science">
        <title>Functional annotation of a full-length Arabidopsis cDNA collection.</title>
        <authorList>
            <person name="Seki M."/>
            <person name="Narusaka M."/>
            <person name="Kamiya A."/>
            <person name="Ishida J."/>
            <person name="Satou M."/>
            <person name="Sakurai T."/>
            <person name="Nakajima M."/>
            <person name="Enju A."/>
            <person name="Akiyama K."/>
            <person name="Oono Y."/>
            <person name="Muramatsu M."/>
            <person name="Hayashizaki Y."/>
            <person name="Kawai J."/>
            <person name="Carninci P."/>
            <person name="Itoh M."/>
            <person name="Ishii Y."/>
            <person name="Arakawa T."/>
            <person name="Shibata K."/>
            <person name="Shinagawa A."/>
            <person name="Shinozaki K."/>
        </authorList>
    </citation>
    <scope>NUCLEOTIDE SEQUENCE [LARGE SCALE MRNA]</scope>
    <source>
        <strain>cv. Columbia</strain>
    </source>
</reference>
<reference key="4">
    <citation type="journal article" date="2003" name="Science">
        <title>Empirical analysis of transcriptional activity in the Arabidopsis genome.</title>
        <authorList>
            <person name="Yamada K."/>
            <person name="Lim J."/>
            <person name="Dale J.M."/>
            <person name="Chen H."/>
            <person name="Shinn P."/>
            <person name="Palm C.J."/>
            <person name="Southwick A.M."/>
            <person name="Wu H.C."/>
            <person name="Kim C.J."/>
            <person name="Nguyen M."/>
            <person name="Pham P.K."/>
            <person name="Cheuk R.F."/>
            <person name="Karlin-Newmann G."/>
            <person name="Liu S.X."/>
            <person name="Lam B."/>
            <person name="Sakano H."/>
            <person name="Wu T."/>
            <person name="Yu G."/>
            <person name="Miranda M."/>
            <person name="Quach H.L."/>
            <person name="Tripp M."/>
            <person name="Chang C.H."/>
            <person name="Lee J.M."/>
            <person name="Toriumi M.J."/>
            <person name="Chan M.M."/>
            <person name="Tang C.C."/>
            <person name="Onodera C.S."/>
            <person name="Deng J.M."/>
            <person name="Akiyama K."/>
            <person name="Ansari Y."/>
            <person name="Arakawa T."/>
            <person name="Banh J."/>
            <person name="Banno F."/>
            <person name="Bowser L."/>
            <person name="Brooks S.Y."/>
            <person name="Carninci P."/>
            <person name="Chao Q."/>
            <person name="Choy N."/>
            <person name="Enju A."/>
            <person name="Goldsmith A.D."/>
            <person name="Gurjal M."/>
            <person name="Hansen N.F."/>
            <person name="Hayashizaki Y."/>
            <person name="Johnson-Hopson C."/>
            <person name="Hsuan V.W."/>
            <person name="Iida K."/>
            <person name="Karnes M."/>
            <person name="Khan S."/>
            <person name="Koesema E."/>
            <person name="Ishida J."/>
            <person name="Jiang P.X."/>
            <person name="Jones T."/>
            <person name="Kawai J."/>
            <person name="Kamiya A."/>
            <person name="Meyers C."/>
            <person name="Nakajima M."/>
            <person name="Narusaka M."/>
            <person name="Seki M."/>
            <person name="Sakurai T."/>
            <person name="Satou M."/>
            <person name="Tamse R."/>
            <person name="Vaysberg M."/>
            <person name="Wallender E.K."/>
            <person name="Wong C."/>
            <person name="Yamamura Y."/>
            <person name="Yuan S."/>
            <person name="Shinozaki K."/>
            <person name="Davis R.W."/>
            <person name="Theologis A."/>
            <person name="Ecker J.R."/>
        </authorList>
    </citation>
    <scope>NUCLEOTIDE SEQUENCE [LARGE SCALE MRNA]</scope>
    <source>
        <strain>cv. Columbia</strain>
    </source>
</reference>
<reference key="5">
    <citation type="journal article" date="2007" name="Plant J.">
        <title>Identification of a flavin-monooxygenase as the S-oxygenating enzyme in aliphatic glucosinolate biosynthesis in Arabidopsis.</title>
        <authorList>
            <person name="Hansen B.G."/>
            <person name="Kliebenstein D.J."/>
            <person name="Halkier B.A."/>
        </authorList>
    </citation>
    <scope>GENE FAMILY</scope>
    <source>
        <strain>cv. Columbia</strain>
    </source>
</reference>
<reference key="6">
    <citation type="journal article" date="2010" name="Plant J.">
        <title>Arabidopsis homolog of the yeast TREX-2 mRNA export complex: components and anchoring nucleoporin.</title>
        <authorList>
            <person name="Lu Q."/>
            <person name="Tang X."/>
            <person name="Tian G."/>
            <person name="Wang F."/>
            <person name="Liu K."/>
            <person name="Nguyen V."/>
            <person name="Kohalmi S.E."/>
            <person name="Keller W.A."/>
            <person name="Tsang E.W."/>
            <person name="Harada J.J."/>
            <person name="Rothstein S.J."/>
            <person name="Cui Y."/>
        </authorList>
    </citation>
    <scope>INTERACTION WITH EER5</scope>
</reference>
<evidence type="ECO:0000250" key="1">
    <source>
        <dbReference type="UniProtKB" id="Q9SS04"/>
    </source>
</evidence>
<evidence type="ECO:0000255" key="2"/>
<evidence type="ECO:0000269" key="3">
    <source>
    </source>
</evidence>
<evidence type="ECO:0000303" key="4">
    <source>
    </source>
</evidence>
<evidence type="ECO:0000305" key="5"/>
<evidence type="ECO:0000312" key="6">
    <source>
        <dbReference type="Araport" id="AT5G61290"/>
    </source>
</evidence>
<evidence type="ECO:0000312" key="7">
    <source>
        <dbReference type="EMBL" id="BAB08484.1"/>
    </source>
</evidence>
<comment type="function">
    <text evidence="1">Catalyzes the conversion of methylthioalkyl glucosinolates of any chain length into methylsulfinylalkyl glucosinolates.</text>
</comment>
<comment type="cofactor">
    <cofactor evidence="5">
        <name>FAD</name>
        <dbReference type="ChEBI" id="CHEBI:57692"/>
    </cofactor>
</comment>
<comment type="subunit">
    <text evidence="3">Interacts with EER5.</text>
</comment>
<comment type="similarity">
    <text evidence="5">Belongs to the FMO family.</text>
</comment>
<dbReference type="EC" id="1.8.-.-" evidence="5"/>
<dbReference type="EMBL" id="AB010073">
    <property type="protein sequence ID" value="BAB08484.1"/>
    <property type="molecule type" value="Genomic_DNA"/>
</dbReference>
<dbReference type="EMBL" id="CP002688">
    <property type="protein sequence ID" value="AED97448.1"/>
    <property type="molecule type" value="Genomic_DNA"/>
</dbReference>
<dbReference type="EMBL" id="AK117661">
    <property type="protein sequence ID" value="BAC42314.1"/>
    <property type="molecule type" value="mRNA"/>
</dbReference>
<dbReference type="EMBL" id="BT006095">
    <property type="protein sequence ID" value="AAP04080.1"/>
    <property type="molecule type" value="mRNA"/>
</dbReference>
<dbReference type="RefSeq" id="NP_200937.1">
    <property type="nucleotide sequence ID" value="NM_125522.4"/>
</dbReference>
<dbReference type="SMR" id="Q9FLK4"/>
<dbReference type="BioGRID" id="21494">
    <property type="interactions" value="1"/>
</dbReference>
<dbReference type="FunCoup" id="Q9FLK4">
    <property type="interactions" value="565"/>
</dbReference>
<dbReference type="IntAct" id="Q9FLK4">
    <property type="interactions" value="1"/>
</dbReference>
<dbReference type="STRING" id="3702.Q9FLK4"/>
<dbReference type="PaxDb" id="3702-AT5G61290.1"/>
<dbReference type="ProteomicsDB" id="247229"/>
<dbReference type="EnsemblPlants" id="AT5G61290.1">
    <property type="protein sequence ID" value="AT5G61290.1"/>
    <property type="gene ID" value="AT5G61290"/>
</dbReference>
<dbReference type="GeneID" id="836250"/>
<dbReference type="Gramene" id="AT5G61290.1">
    <property type="protein sequence ID" value="AT5G61290.1"/>
    <property type="gene ID" value="AT5G61290"/>
</dbReference>
<dbReference type="KEGG" id="ath:AT5G61290"/>
<dbReference type="Araport" id="AT5G61290"/>
<dbReference type="TAIR" id="AT5G61290"/>
<dbReference type="eggNOG" id="KOG1399">
    <property type="taxonomic scope" value="Eukaryota"/>
</dbReference>
<dbReference type="HOGENOM" id="CLU_006909_3_3_1"/>
<dbReference type="InParanoid" id="Q9FLK4"/>
<dbReference type="OMA" id="PVIHKLM"/>
<dbReference type="PhylomeDB" id="Q9FLK4"/>
<dbReference type="BioCyc" id="ARA:AT5G61290-MONOMER"/>
<dbReference type="PRO" id="PR:Q9FLK4"/>
<dbReference type="Proteomes" id="UP000006548">
    <property type="component" value="Chromosome 5"/>
</dbReference>
<dbReference type="ExpressionAtlas" id="Q9FLK4">
    <property type="expression patterns" value="baseline and differential"/>
</dbReference>
<dbReference type="GO" id="GO:0050660">
    <property type="term" value="F:flavin adenine dinucleotide binding"/>
    <property type="evidence" value="ECO:0007669"/>
    <property type="project" value="InterPro"/>
</dbReference>
<dbReference type="GO" id="GO:0004499">
    <property type="term" value="F:N,N-dimethylaniline monooxygenase activity"/>
    <property type="evidence" value="ECO:0007669"/>
    <property type="project" value="InterPro"/>
</dbReference>
<dbReference type="GO" id="GO:0050661">
    <property type="term" value="F:NADP binding"/>
    <property type="evidence" value="ECO:0007669"/>
    <property type="project" value="InterPro"/>
</dbReference>
<dbReference type="FunFam" id="3.50.50.60:FF:000147">
    <property type="entry name" value="Flavin-containing monooxygenase"/>
    <property type="match status" value="1"/>
</dbReference>
<dbReference type="Gene3D" id="3.50.50.60">
    <property type="entry name" value="FAD/NAD(P)-binding domain"/>
    <property type="match status" value="2"/>
</dbReference>
<dbReference type="InterPro" id="IPR036188">
    <property type="entry name" value="FAD/NAD-bd_sf"/>
</dbReference>
<dbReference type="InterPro" id="IPR000960">
    <property type="entry name" value="Flavin_mOase"/>
</dbReference>
<dbReference type="InterPro" id="IPR020946">
    <property type="entry name" value="Flavin_mOase-like"/>
</dbReference>
<dbReference type="InterPro" id="IPR050346">
    <property type="entry name" value="FMO-like"/>
</dbReference>
<dbReference type="PANTHER" id="PTHR23023">
    <property type="entry name" value="DIMETHYLANILINE MONOOXYGENASE"/>
    <property type="match status" value="1"/>
</dbReference>
<dbReference type="Pfam" id="PF00743">
    <property type="entry name" value="FMO-like"/>
    <property type="match status" value="2"/>
</dbReference>
<dbReference type="PIRSF" id="PIRSF000332">
    <property type="entry name" value="FMO"/>
    <property type="match status" value="1"/>
</dbReference>
<dbReference type="PRINTS" id="PR00370">
    <property type="entry name" value="FMOXYGENASE"/>
</dbReference>
<dbReference type="SUPFAM" id="SSF51905">
    <property type="entry name" value="FAD/NAD(P)-binding domain"/>
    <property type="match status" value="2"/>
</dbReference>
<organism>
    <name type="scientific">Arabidopsis thaliana</name>
    <name type="common">Mouse-ear cress</name>
    <dbReference type="NCBI Taxonomy" id="3702"/>
    <lineage>
        <taxon>Eukaryota</taxon>
        <taxon>Viridiplantae</taxon>
        <taxon>Streptophyta</taxon>
        <taxon>Embryophyta</taxon>
        <taxon>Tracheophyta</taxon>
        <taxon>Spermatophyta</taxon>
        <taxon>Magnoliopsida</taxon>
        <taxon>eudicotyledons</taxon>
        <taxon>Gunneridae</taxon>
        <taxon>Pentapetalae</taxon>
        <taxon>rosids</taxon>
        <taxon>malvids</taxon>
        <taxon>Brassicales</taxon>
        <taxon>Brassicaceae</taxon>
        <taxon>Camelineae</taxon>
        <taxon>Arabidopsis</taxon>
    </lineage>
</organism>
<name>GSXL8_ARATH</name>
<gene>
    <name evidence="6" type="ordered locus">At5g61290</name>
    <name evidence="7" type="ORF">MFB13.9</name>
</gene>
<keyword id="KW-0274">FAD</keyword>
<keyword id="KW-0285">Flavoprotein</keyword>
<keyword id="KW-0503">Monooxygenase</keyword>
<keyword id="KW-0521">NADP</keyword>
<keyword id="KW-0560">Oxidoreductase</keyword>
<keyword id="KW-1185">Reference proteome</keyword>
<feature type="chain" id="PRO_0000401963" description="Flavin-containing monooxygenase FMO GS-OX-like 8">
    <location>
        <begin position="1"/>
        <end position="461"/>
    </location>
</feature>
<feature type="binding site" evidence="2">
    <location>
        <begin position="20"/>
        <end position="25"/>
    </location>
    <ligand>
        <name>FAD</name>
        <dbReference type="ChEBI" id="CHEBI:57692"/>
    </ligand>
</feature>
<feature type="binding site" evidence="2">
    <location>
        <begin position="220"/>
        <end position="225"/>
    </location>
    <ligand>
        <name>NADP(+)</name>
        <dbReference type="ChEBI" id="CHEBI:58349"/>
    </ligand>
</feature>
<sequence>MVLVITEPIKSQSKTVCVIGAGPSGLVSARELKKEGHKVVVMEQNHDVGGQWLYQPNVDEEDTLGKTKTLKVHSSVYSSLRLASPREVMGFSDFPFIAKEGRDSRRFPGHEELLLYLKDFCQVFGLREMIRFNVRVEFVGMVNEDDDDDDDVKKWMVKSVKKSGEVMEEVFDAVVVASGHYSYPRLPTIKGMDLWKRKQLHSHIYRVPEPFCDEVVVVVGCSMSGQDISIELVEVAKEVHLSTKSLDIPPGLSKVIEKHQNLHLHPQIESLEEDGRVIFEDGSCIVADTILYCTGYEYKFPFLESKGRVEIDDNRVGPLFEHTFSPSLSPFLSFVGIPRKLIGFPFFESQAKWIAKLLSGKTSLPSSDQMMQSISDFYLAREADGIPKRNTHDIADFNYSDKYADYIGFPHLEEWRKVLCLSAILNSIENLETYRDSWDDDDLLQETLQDPYFTQLSIPSV</sequence>
<protein>
    <recommendedName>
        <fullName evidence="4">Flavin-containing monooxygenase FMO GS-OX-like 8</fullName>
        <ecNumber evidence="5">1.8.-.-</ecNumber>
    </recommendedName>
    <alternativeName>
        <fullName evidence="4">Flavin-monooxygenase glucosinolate S-oxygenase-like 8</fullName>
    </alternativeName>
</protein>